<gene>
    <name type="primary">rpsF</name>
    <name type="synonym">rps6</name>
    <name type="ordered locus">sll1767</name>
</gene>
<comment type="function">
    <text evidence="1">Binds together with bS18 to 16S ribosomal RNA.</text>
</comment>
<comment type="similarity">
    <text evidence="2">Belongs to the bacterial ribosomal protein bS6 family.</text>
</comment>
<name>RS6_SYNY3</name>
<feature type="chain" id="PRO_0000176860" description="Small ribosomal subunit protein bS6">
    <location>
        <begin position="1"/>
        <end position="113"/>
    </location>
</feature>
<evidence type="ECO:0000250" key="1"/>
<evidence type="ECO:0000305" key="2"/>
<accession>P73636</accession>
<organism>
    <name type="scientific">Synechocystis sp. (strain ATCC 27184 / PCC 6803 / Kazusa)</name>
    <dbReference type="NCBI Taxonomy" id="1111708"/>
    <lineage>
        <taxon>Bacteria</taxon>
        <taxon>Bacillati</taxon>
        <taxon>Cyanobacteriota</taxon>
        <taxon>Cyanophyceae</taxon>
        <taxon>Synechococcales</taxon>
        <taxon>Merismopediaceae</taxon>
        <taxon>Synechocystis</taxon>
    </lineage>
</organism>
<protein>
    <recommendedName>
        <fullName evidence="2">Small ribosomal subunit protein bS6</fullName>
    </recommendedName>
    <alternativeName>
        <fullName>30S ribosomal protein S6</fullName>
    </alternativeName>
</protein>
<reference key="1">
    <citation type="journal article" date="1996" name="DNA Res.">
        <title>Sequence analysis of the genome of the unicellular cyanobacterium Synechocystis sp. strain PCC6803. II. Sequence determination of the entire genome and assignment of potential protein-coding regions.</title>
        <authorList>
            <person name="Kaneko T."/>
            <person name="Sato S."/>
            <person name="Kotani H."/>
            <person name="Tanaka A."/>
            <person name="Asamizu E."/>
            <person name="Nakamura Y."/>
            <person name="Miyajima N."/>
            <person name="Hirosawa M."/>
            <person name="Sugiura M."/>
            <person name="Sasamoto S."/>
            <person name="Kimura T."/>
            <person name="Hosouchi T."/>
            <person name="Matsuno A."/>
            <person name="Muraki A."/>
            <person name="Nakazaki N."/>
            <person name="Naruo K."/>
            <person name="Okumura S."/>
            <person name="Shimpo S."/>
            <person name="Takeuchi C."/>
            <person name="Wada T."/>
            <person name="Watanabe A."/>
            <person name="Yamada M."/>
            <person name="Yasuda M."/>
            <person name="Tabata S."/>
        </authorList>
    </citation>
    <scope>NUCLEOTIDE SEQUENCE [LARGE SCALE GENOMIC DNA]</scope>
    <source>
        <strain>ATCC 27184 / PCC 6803 / Kazusa</strain>
    </source>
</reference>
<sequence>MLVNSYELMVILRPDLNEERVSQEVTKYQEFLTNNAAEEVSVKVWGKRRLAYQIRRFNDGIYVLFNFNGEGQQIALIERDMRLNDNVMRFLSIKLTPEKPEKEKKAKAVAVEA</sequence>
<proteinExistence type="inferred from homology"/>
<keyword id="KW-1185">Reference proteome</keyword>
<keyword id="KW-0687">Ribonucleoprotein</keyword>
<keyword id="KW-0689">Ribosomal protein</keyword>
<keyword id="KW-0694">RNA-binding</keyword>
<keyword id="KW-0699">rRNA-binding</keyword>
<dbReference type="EMBL" id="BA000022">
    <property type="protein sequence ID" value="BAA17681.1"/>
    <property type="molecule type" value="Genomic_DNA"/>
</dbReference>
<dbReference type="PIR" id="S77123">
    <property type="entry name" value="S77123"/>
</dbReference>
<dbReference type="SMR" id="P73636"/>
<dbReference type="FunCoup" id="P73636">
    <property type="interactions" value="383"/>
</dbReference>
<dbReference type="STRING" id="1148.gene:10498548"/>
<dbReference type="PaxDb" id="1148-1652762"/>
<dbReference type="EnsemblBacteria" id="BAA17681">
    <property type="protein sequence ID" value="BAA17681"/>
    <property type="gene ID" value="BAA17681"/>
</dbReference>
<dbReference type="KEGG" id="syn:sll1767"/>
<dbReference type="eggNOG" id="COG0360">
    <property type="taxonomic scope" value="Bacteria"/>
</dbReference>
<dbReference type="InParanoid" id="P73636"/>
<dbReference type="PhylomeDB" id="P73636"/>
<dbReference type="Proteomes" id="UP000001425">
    <property type="component" value="Chromosome"/>
</dbReference>
<dbReference type="GO" id="GO:0005737">
    <property type="term" value="C:cytoplasm"/>
    <property type="evidence" value="ECO:0007669"/>
    <property type="project" value="UniProtKB-ARBA"/>
</dbReference>
<dbReference type="GO" id="GO:1990904">
    <property type="term" value="C:ribonucleoprotein complex"/>
    <property type="evidence" value="ECO:0007669"/>
    <property type="project" value="UniProtKB-KW"/>
</dbReference>
<dbReference type="GO" id="GO:0005840">
    <property type="term" value="C:ribosome"/>
    <property type="evidence" value="ECO:0007669"/>
    <property type="project" value="UniProtKB-KW"/>
</dbReference>
<dbReference type="GO" id="GO:0070181">
    <property type="term" value="F:small ribosomal subunit rRNA binding"/>
    <property type="evidence" value="ECO:0000318"/>
    <property type="project" value="GO_Central"/>
</dbReference>
<dbReference type="GO" id="GO:0003735">
    <property type="term" value="F:structural constituent of ribosome"/>
    <property type="evidence" value="ECO:0000318"/>
    <property type="project" value="GO_Central"/>
</dbReference>
<dbReference type="GO" id="GO:0006412">
    <property type="term" value="P:translation"/>
    <property type="evidence" value="ECO:0007669"/>
    <property type="project" value="UniProtKB-UniRule"/>
</dbReference>
<dbReference type="CDD" id="cd15487">
    <property type="entry name" value="bS6_chloro_cyano"/>
    <property type="match status" value="1"/>
</dbReference>
<dbReference type="Gene3D" id="3.30.70.60">
    <property type="match status" value="1"/>
</dbReference>
<dbReference type="HAMAP" id="MF_00360">
    <property type="entry name" value="Ribosomal_bS6"/>
    <property type="match status" value="1"/>
</dbReference>
<dbReference type="InterPro" id="IPR000529">
    <property type="entry name" value="Ribosomal_bS6"/>
</dbReference>
<dbReference type="InterPro" id="IPR020815">
    <property type="entry name" value="Ribosomal_bS6_CS"/>
</dbReference>
<dbReference type="InterPro" id="IPR035980">
    <property type="entry name" value="Ribosomal_bS6_sf"/>
</dbReference>
<dbReference type="InterPro" id="IPR020814">
    <property type="entry name" value="Ribosomal_S6_plastid/chlpt"/>
</dbReference>
<dbReference type="InterPro" id="IPR014717">
    <property type="entry name" value="Transl_elong_EF1B/ribsomal_bS6"/>
</dbReference>
<dbReference type="NCBIfam" id="TIGR00166">
    <property type="entry name" value="S6"/>
    <property type="match status" value="1"/>
</dbReference>
<dbReference type="PANTHER" id="PTHR21011">
    <property type="entry name" value="MITOCHONDRIAL 28S RIBOSOMAL PROTEIN S6"/>
    <property type="match status" value="1"/>
</dbReference>
<dbReference type="PANTHER" id="PTHR21011:SF1">
    <property type="entry name" value="SMALL RIBOSOMAL SUBUNIT PROTEIN BS6M"/>
    <property type="match status" value="1"/>
</dbReference>
<dbReference type="Pfam" id="PF01250">
    <property type="entry name" value="Ribosomal_S6"/>
    <property type="match status" value="1"/>
</dbReference>
<dbReference type="SUPFAM" id="SSF54995">
    <property type="entry name" value="Ribosomal protein S6"/>
    <property type="match status" value="1"/>
</dbReference>
<dbReference type="PROSITE" id="PS01048">
    <property type="entry name" value="RIBOSOMAL_S6"/>
    <property type="match status" value="1"/>
</dbReference>